<accession>Q1B568</accession>
<organism>
    <name type="scientific">Mycobacterium sp. (strain MCS)</name>
    <dbReference type="NCBI Taxonomy" id="164756"/>
    <lineage>
        <taxon>Bacteria</taxon>
        <taxon>Bacillati</taxon>
        <taxon>Actinomycetota</taxon>
        <taxon>Actinomycetes</taxon>
        <taxon>Mycobacteriales</taxon>
        <taxon>Mycobacteriaceae</taxon>
        <taxon>Mycobacterium</taxon>
    </lineage>
</organism>
<comment type="function">
    <text evidence="1">Catalyzes the formation of the alpha-1,6-glucosidic linkages in glycogen by scission of a 1,4-alpha-linked oligosaccharide from growing alpha-1,4-glucan chains and the subsequent attachment of the oligosaccharide to the alpha-1,6 position.</text>
</comment>
<comment type="catalytic activity">
    <reaction evidence="1">
        <text>Transfers a segment of a (1-&gt;4)-alpha-D-glucan chain to a primary hydroxy group in a similar glucan chain.</text>
        <dbReference type="EC" id="2.4.1.18"/>
    </reaction>
</comment>
<comment type="pathway">
    <text evidence="1">Glycan biosynthesis; glycogen biosynthesis.</text>
</comment>
<comment type="subunit">
    <text evidence="1">Monomer.</text>
</comment>
<comment type="similarity">
    <text evidence="1">Belongs to the glycosyl hydrolase 13 family. GlgB subfamily.</text>
</comment>
<gene>
    <name evidence="1" type="primary">glgB</name>
    <name type="ordered locus">Mmcs_3861</name>
</gene>
<reference key="1">
    <citation type="submission" date="2006-06" db="EMBL/GenBank/DDBJ databases">
        <title>Complete sequence of chromosome of Mycobacterium sp. MCS.</title>
        <authorList>
            <consortium name="US DOE Joint Genome Institute"/>
            <person name="Copeland A."/>
            <person name="Lucas S."/>
            <person name="Lapidus A."/>
            <person name="Barry K."/>
            <person name="Detter J.C."/>
            <person name="Glavina del Rio T."/>
            <person name="Hammon N."/>
            <person name="Israni S."/>
            <person name="Dalin E."/>
            <person name="Tice H."/>
            <person name="Pitluck S."/>
            <person name="Martinez M."/>
            <person name="Schmutz J."/>
            <person name="Larimer F."/>
            <person name="Land M."/>
            <person name="Hauser L."/>
            <person name="Kyrpides N."/>
            <person name="Kim E."/>
            <person name="Miller C.D."/>
            <person name="Hughes J.E."/>
            <person name="Anderson A.J."/>
            <person name="Sims R.C."/>
            <person name="Richardson P."/>
        </authorList>
    </citation>
    <scope>NUCLEOTIDE SEQUENCE [LARGE SCALE GENOMIC DNA]</scope>
    <source>
        <strain>MCS</strain>
    </source>
</reference>
<keyword id="KW-0119">Carbohydrate metabolism</keyword>
<keyword id="KW-0320">Glycogen biosynthesis</keyword>
<keyword id="KW-0321">Glycogen metabolism</keyword>
<keyword id="KW-0328">Glycosyltransferase</keyword>
<keyword id="KW-0808">Transferase</keyword>
<proteinExistence type="inferred from homology"/>
<name>GLGB_MYCSS</name>
<sequence length="759" mass="84965">MAKTKGLPKDTAVTPSPHLRPHTADLNRLLAGEHHDPHSILGAHEYDDHTVIRAYRPHATEVAAVVGGERHVFTHLEAGVFAVTLPFTGLIDYRLEVGYDHGGDQPHIHHTADAYRFLPTLGEMDLHLFSEGRHERLWEVLGAHPRTFETPDGVVEGVSFAVWAPNANGVQLIGDFNHWDGNEAQLRVLGSTGVWELFWPDFPVDGLYKFRIHGADGVVSERADPMAFATEVPPQTASRVTTSSYTWNDDAWMTQRAAQNPVFEPMSTLEVHLMSWRPGLSYVELADQLTEYIVEHGFTHVEMLPVAEHPFGGSWGYQVTSYYAPTSRLGTPDEFRYLVDRLHQAGIGVIVDWVPAHFPKDAWALGRFDGTALYEHADPRRGEQLDWGTYVFDFGRAEVRNFLVANALYWLQEFHVDGLRVDAVASMLYLDYSRPEGGWTPNIYGGRENLEAVQFLQEMNATVHKASPGIVTIAEESTSWPGVTRPTNLGGLGFSMKWNMGWMNDTLAFISRDPIHRSYHHHEMTFSMLYAFSENYVLPISHDEVVHGKGTLWGRMLGDDHRKAAGVRQLLAYQWAHPGKQLLFQGQEFGQRAEWSEERGVDWYQLDENSYSGGILRMISDMNGIYTSHRALWSHDTSPEGYSWIDANDSTNNVLSFLRYGDDGSVLACVFNFSGSEHSQYRLGLPHAGTWREVLNTDAADYNGAGIGNYGAVQATDEPWHGRPASAVMVLPPLSALWFEPVAAEAPVVQEPPTAPPLS</sequence>
<dbReference type="EC" id="2.4.1.18" evidence="1"/>
<dbReference type="EMBL" id="CP000384">
    <property type="protein sequence ID" value="ABG09966.1"/>
    <property type="molecule type" value="Genomic_DNA"/>
</dbReference>
<dbReference type="SMR" id="Q1B568"/>
<dbReference type="CAZy" id="CBM48">
    <property type="family name" value="Carbohydrate-Binding Module Family 48"/>
</dbReference>
<dbReference type="CAZy" id="GH13">
    <property type="family name" value="Glycoside Hydrolase Family 13"/>
</dbReference>
<dbReference type="KEGG" id="mmc:Mmcs_3861"/>
<dbReference type="HOGENOM" id="CLU_004245_3_2_11"/>
<dbReference type="BioCyc" id="MSP164756:G1G6O-3942-MONOMER"/>
<dbReference type="UniPathway" id="UPA00164"/>
<dbReference type="GO" id="GO:0005829">
    <property type="term" value="C:cytosol"/>
    <property type="evidence" value="ECO:0007669"/>
    <property type="project" value="TreeGrafter"/>
</dbReference>
<dbReference type="GO" id="GO:0003844">
    <property type="term" value="F:1,4-alpha-glucan branching enzyme activity"/>
    <property type="evidence" value="ECO:0007669"/>
    <property type="project" value="UniProtKB-UniRule"/>
</dbReference>
<dbReference type="GO" id="GO:0043169">
    <property type="term" value="F:cation binding"/>
    <property type="evidence" value="ECO:0007669"/>
    <property type="project" value="InterPro"/>
</dbReference>
<dbReference type="GO" id="GO:0004553">
    <property type="term" value="F:hydrolase activity, hydrolyzing O-glycosyl compounds"/>
    <property type="evidence" value="ECO:0007669"/>
    <property type="project" value="InterPro"/>
</dbReference>
<dbReference type="GO" id="GO:0005978">
    <property type="term" value="P:glycogen biosynthetic process"/>
    <property type="evidence" value="ECO:0007669"/>
    <property type="project" value="UniProtKB-UniRule"/>
</dbReference>
<dbReference type="CDD" id="cd11322">
    <property type="entry name" value="AmyAc_Glg_BE"/>
    <property type="match status" value="1"/>
</dbReference>
<dbReference type="CDD" id="cd02855">
    <property type="entry name" value="E_set_GBE_prok_N"/>
    <property type="match status" value="1"/>
</dbReference>
<dbReference type="FunFam" id="2.60.40.10:FF:000169">
    <property type="entry name" value="1,4-alpha-glucan branching enzyme GlgB"/>
    <property type="match status" value="1"/>
</dbReference>
<dbReference type="FunFam" id="2.60.40.1180:FF:000002">
    <property type="entry name" value="1,4-alpha-glucan branching enzyme GlgB"/>
    <property type="match status" value="1"/>
</dbReference>
<dbReference type="FunFam" id="3.20.20.80:FF:000003">
    <property type="entry name" value="1,4-alpha-glucan branching enzyme GlgB"/>
    <property type="match status" value="1"/>
</dbReference>
<dbReference type="Gene3D" id="3.20.20.80">
    <property type="entry name" value="Glycosidases"/>
    <property type="match status" value="1"/>
</dbReference>
<dbReference type="Gene3D" id="2.60.40.1180">
    <property type="entry name" value="Golgi alpha-mannosidase II"/>
    <property type="match status" value="1"/>
</dbReference>
<dbReference type="Gene3D" id="2.60.40.10">
    <property type="entry name" value="Immunoglobulins"/>
    <property type="match status" value="2"/>
</dbReference>
<dbReference type="HAMAP" id="MF_00685">
    <property type="entry name" value="GlgB"/>
    <property type="match status" value="1"/>
</dbReference>
<dbReference type="InterPro" id="IPR006048">
    <property type="entry name" value="A-amylase/branching_C"/>
</dbReference>
<dbReference type="InterPro" id="IPR037439">
    <property type="entry name" value="Branching_enzy"/>
</dbReference>
<dbReference type="InterPro" id="IPR006407">
    <property type="entry name" value="GlgB"/>
</dbReference>
<dbReference type="InterPro" id="IPR054169">
    <property type="entry name" value="GlgB_N"/>
</dbReference>
<dbReference type="InterPro" id="IPR044143">
    <property type="entry name" value="GlgB_N_E_set_prok"/>
</dbReference>
<dbReference type="InterPro" id="IPR006047">
    <property type="entry name" value="Glyco_hydro_13_cat_dom"/>
</dbReference>
<dbReference type="InterPro" id="IPR004193">
    <property type="entry name" value="Glyco_hydro_13_N"/>
</dbReference>
<dbReference type="InterPro" id="IPR013780">
    <property type="entry name" value="Glyco_hydro_b"/>
</dbReference>
<dbReference type="InterPro" id="IPR017853">
    <property type="entry name" value="Glycoside_hydrolase_SF"/>
</dbReference>
<dbReference type="InterPro" id="IPR013783">
    <property type="entry name" value="Ig-like_fold"/>
</dbReference>
<dbReference type="InterPro" id="IPR014756">
    <property type="entry name" value="Ig_E-set"/>
</dbReference>
<dbReference type="NCBIfam" id="TIGR01515">
    <property type="entry name" value="branching_enzym"/>
    <property type="match status" value="1"/>
</dbReference>
<dbReference type="NCBIfam" id="NF003811">
    <property type="entry name" value="PRK05402.1"/>
    <property type="match status" value="1"/>
</dbReference>
<dbReference type="NCBIfam" id="NF008967">
    <property type="entry name" value="PRK12313.1"/>
    <property type="match status" value="1"/>
</dbReference>
<dbReference type="PANTHER" id="PTHR43651">
    <property type="entry name" value="1,4-ALPHA-GLUCAN-BRANCHING ENZYME"/>
    <property type="match status" value="1"/>
</dbReference>
<dbReference type="PANTHER" id="PTHR43651:SF3">
    <property type="entry name" value="1,4-ALPHA-GLUCAN-BRANCHING ENZYME"/>
    <property type="match status" value="1"/>
</dbReference>
<dbReference type="Pfam" id="PF00128">
    <property type="entry name" value="Alpha-amylase"/>
    <property type="match status" value="2"/>
</dbReference>
<dbReference type="Pfam" id="PF02806">
    <property type="entry name" value="Alpha-amylase_C"/>
    <property type="match status" value="1"/>
</dbReference>
<dbReference type="Pfam" id="PF02922">
    <property type="entry name" value="CBM_48"/>
    <property type="match status" value="1"/>
</dbReference>
<dbReference type="Pfam" id="PF22019">
    <property type="entry name" value="GlgB_N"/>
    <property type="match status" value="1"/>
</dbReference>
<dbReference type="PIRSF" id="PIRSF000463">
    <property type="entry name" value="GlgB"/>
    <property type="match status" value="1"/>
</dbReference>
<dbReference type="SMART" id="SM00642">
    <property type="entry name" value="Aamy"/>
    <property type="match status" value="1"/>
</dbReference>
<dbReference type="SUPFAM" id="SSF51445">
    <property type="entry name" value="(Trans)glycosidases"/>
    <property type="match status" value="1"/>
</dbReference>
<dbReference type="SUPFAM" id="SSF81296">
    <property type="entry name" value="E set domains"/>
    <property type="match status" value="2"/>
</dbReference>
<dbReference type="SUPFAM" id="SSF51011">
    <property type="entry name" value="Glycosyl hydrolase domain"/>
    <property type="match status" value="1"/>
</dbReference>
<protein>
    <recommendedName>
        <fullName evidence="1">1,4-alpha-glucan branching enzyme GlgB</fullName>
        <ecNumber evidence="1">2.4.1.18</ecNumber>
    </recommendedName>
    <alternativeName>
        <fullName evidence="1">1,4-alpha-D-glucan:1,4-alpha-D-glucan 6-glucosyl-transferase</fullName>
    </alternativeName>
    <alternativeName>
        <fullName evidence="1">Alpha-(1-&gt;4)-glucan branching enzyme</fullName>
    </alternativeName>
    <alternativeName>
        <fullName evidence="1">Glycogen branching enzyme</fullName>
        <shortName evidence="1">BE</shortName>
    </alternativeName>
</protein>
<feature type="chain" id="PRO_0000260667" description="1,4-alpha-glucan branching enzyme GlgB">
    <location>
        <begin position="1"/>
        <end position="759"/>
    </location>
</feature>
<feature type="region of interest" description="Disordered" evidence="2">
    <location>
        <begin position="1"/>
        <end position="22"/>
    </location>
</feature>
<feature type="active site" description="Nucleophile" evidence="1">
    <location>
        <position position="422"/>
    </location>
</feature>
<feature type="active site" description="Proton donor" evidence="1">
    <location>
        <position position="475"/>
    </location>
</feature>
<evidence type="ECO:0000255" key="1">
    <source>
        <dbReference type="HAMAP-Rule" id="MF_00685"/>
    </source>
</evidence>
<evidence type="ECO:0000256" key="2">
    <source>
        <dbReference type="SAM" id="MobiDB-lite"/>
    </source>
</evidence>